<organism>
    <name type="scientific">Salmonella gallinarum (strain 287/91 / NCTC 13346)</name>
    <dbReference type="NCBI Taxonomy" id="550538"/>
    <lineage>
        <taxon>Bacteria</taxon>
        <taxon>Pseudomonadati</taxon>
        <taxon>Pseudomonadota</taxon>
        <taxon>Gammaproteobacteria</taxon>
        <taxon>Enterobacterales</taxon>
        <taxon>Enterobacteriaceae</taxon>
        <taxon>Salmonella</taxon>
    </lineage>
</organism>
<gene>
    <name evidence="1" type="primary">arnF</name>
    <name type="ordered locus">SG2332</name>
</gene>
<name>ARNF_SALG2</name>
<proteinExistence type="inferred from homology"/>
<keyword id="KW-0997">Cell inner membrane</keyword>
<keyword id="KW-1003">Cell membrane</keyword>
<keyword id="KW-0441">Lipid A biosynthesis</keyword>
<keyword id="KW-0444">Lipid biosynthesis</keyword>
<keyword id="KW-0443">Lipid metabolism</keyword>
<keyword id="KW-0448">Lipopolysaccharide biosynthesis</keyword>
<keyword id="KW-0472">Membrane</keyword>
<keyword id="KW-0812">Transmembrane</keyword>
<keyword id="KW-1133">Transmembrane helix</keyword>
<keyword id="KW-0813">Transport</keyword>
<dbReference type="EMBL" id="AM933173">
    <property type="protein sequence ID" value="CAR38162.1"/>
    <property type="molecule type" value="Genomic_DNA"/>
</dbReference>
<dbReference type="RefSeq" id="WP_000538696.1">
    <property type="nucleotide sequence ID" value="NC_011274.1"/>
</dbReference>
<dbReference type="KEGG" id="seg:SG2332"/>
<dbReference type="HOGENOM" id="CLU_131462_1_0_6"/>
<dbReference type="UniPathway" id="UPA00030"/>
<dbReference type="Proteomes" id="UP000008321">
    <property type="component" value="Chromosome"/>
</dbReference>
<dbReference type="GO" id="GO:0005886">
    <property type="term" value="C:plasma membrane"/>
    <property type="evidence" value="ECO:0007669"/>
    <property type="project" value="UniProtKB-SubCell"/>
</dbReference>
<dbReference type="GO" id="GO:1901505">
    <property type="term" value="F:carbohydrate derivative transmembrane transporter activity"/>
    <property type="evidence" value="ECO:0007669"/>
    <property type="project" value="InterPro"/>
</dbReference>
<dbReference type="GO" id="GO:0009245">
    <property type="term" value="P:lipid A biosynthetic process"/>
    <property type="evidence" value="ECO:0007669"/>
    <property type="project" value="UniProtKB-UniRule"/>
</dbReference>
<dbReference type="GO" id="GO:0009103">
    <property type="term" value="P:lipopolysaccharide biosynthetic process"/>
    <property type="evidence" value="ECO:0007669"/>
    <property type="project" value="UniProtKB-UniRule"/>
</dbReference>
<dbReference type="Gene3D" id="1.10.3730.20">
    <property type="match status" value="1"/>
</dbReference>
<dbReference type="HAMAP" id="MF_00538">
    <property type="entry name" value="Flippase_ArnF"/>
    <property type="match status" value="1"/>
</dbReference>
<dbReference type="InterPro" id="IPR022832">
    <property type="entry name" value="Flippase_ArnF"/>
</dbReference>
<dbReference type="InterPro" id="IPR000390">
    <property type="entry name" value="Small_drug/metabolite_transptr"/>
</dbReference>
<dbReference type="NCBIfam" id="NF002816">
    <property type="entry name" value="PRK02971.1-2"/>
    <property type="match status" value="1"/>
</dbReference>
<dbReference type="PANTHER" id="PTHR30561:SF9">
    <property type="entry name" value="4-AMINO-4-DEOXY-L-ARABINOSE-PHOSPHOUNDECAPRENOL FLIPPASE SUBUNIT ARNF-RELATED"/>
    <property type="match status" value="1"/>
</dbReference>
<dbReference type="PANTHER" id="PTHR30561">
    <property type="entry name" value="SMR FAMILY PROTON-DEPENDENT DRUG EFFLUX TRANSPORTER SUGE"/>
    <property type="match status" value="1"/>
</dbReference>
<feature type="chain" id="PRO_1000128667" description="Probable 4-amino-4-deoxy-L-arabinose-phosphoundecaprenol flippase subunit ArnF">
    <location>
        <begin position="1"/>
        <end position="125"/>
    </location>
</feature>
<feature type="topological domain" description="Cytoplasmic" evidence="1">
    <location>
        <begin position="1"/>
        <end position="2"/>
    </location>
</feature>
<feature type="transmembrane region" description="Helical" evidence="1">
    <location>
        <begin position="3"/>
        <end position="23"/>
    </location>
</feature>
<feature type="topological domain" description="Periplasmic" evidence="1">
    <location>
        <begin position="24"/>
        <end position="33"/>
    </location>
</feature>
<feature type="transmembrane region" description="Helical" evidence="1">
    <location>
        <begin position="34"/>
        <end position="54"/>
    </location>
</feature>
<feature type="topological domain" description="Cytoplasmic" evidence="1">
    <location>
        <begin position="55"/>
        <end position="76"/>
    </location>
</feature>
<feature type="transmembrane region" description="Helical" evidence="1">
    <location>
        <begin position="77"/>
        <end position="97"/>
    </location>
</feature>
<feature type="topological domain" description="Periplasmic" evidence="1">
    <location>
        <begin position="98"/>
        <end position="100"/>
    </location>
</feature>
<feature type="transmembrane region" description="Helical" evidence="1">
    <location>
        <begin position="101"/>
        <end position="121"/>
    </location>
</feature>
<feature type="topological domain" description="Cytoplasmic" evidence="1">
    <location>
        <begin position="122"/>
        <end position="125"/>
    </location>
</feature>
<accession>B5RCC8</accession>
<sequence length="125" mass="13096">MGVMWGLISVAIASLAQLSLGFAMMRLPSIAHPLAFISGLGALNAATLALFAGLAGYLVSVFCWHKTLHTLALSKAYALLSLSYVLVWVASMLLPGLQGAFSLKAMLGVLCIMAGVMLIFLPARS</sequence>
<evidence type="ECO:0000255" key="1">
    <source>
        <dbReference type="HAMAP-Rule" id="MF_00538"/>
    </source>
</evidence>
<comment type="function">
    <text evidence="1">Translocates 4-amino-4-deoxy-L-arabinose-phosphoundecaprenol (alpha-L-Ara4N-phosphoundecaprenol) from the cytoplasmic to the periplasmic side of the inner membrane.</text>
</comment>
<comment type="pathway">
    <text evidence="1">Bacterial outer membrane biogenesis; lipopolysaccharide biosynthesis.</text>
</comment>
<comment type="subunit">
    <text evidence="1">Heterodimer of ArnE and ArnF.</text>
</comment>
<comment type="subcellular location">
    <subcellularLocation>
        <location evidence="1">Cell inner membrane</location>
        <topology evidence="1">Multi-pass membrane protein</topology>
    </subcellularLocation>
</comment>
<comment type="similarity">
    <text evidence="1">Belongs to the ArnF family.</text>
</comment>
<protein>
    <recommendedName>
        <fullName evidence="1">Probable 4-amino-4-deoxy-L-arabinose-phosphoundecaprenol flippase subunit ArnF</fullName>
        <shortName evidence="1">L-Ara4N-phosphoundecaprenol flippase subunit ArnF</shortName>
    </recommendedName>
    <alternativeName>
        <fullName evidence="1">Undecaprenyl phosphate-aminoarabinose flippase subunit ArnF</fullName>
    </alternativeName>
</protein>
<reference key="1">
    <citation type="journal article" date="2008" name="Genome Res.">
        <title>Comparative genome analysis of Salmonella enteritidis PT4 and Salmonella gallinarum 287/91 provides insights into evolutionary and host adaptation pathways.</title>
        <authorList>
            <person name="Thomson N.R."/>
            <person name="Clayton D.J."/>
            <person name="Windhorst D."/>
            <person name="Vernikos G."/>
            <person name="Davidson S."/>
            <person name="Churcher C."/>
            <person name="Quail M.A."/>
            <person name="Stevens M."/>
            <person name="Jones M.A."/>
            <person name="Watson M."/>
            <person name="Barron A."/>
            <person name="Layton A."/>
            <person name="Pickard D."/>
            <person name="Kingsley R.A."/>
            <person name="Bignell A."/>
            <person name="Clark L."/>
            <person name="Harris B."/>
            <person name="Ormond D."/>
            <person name="Abdellah Z."/>
            <person name="Brooks K."/>
            <person name="Cherevach I."/>
            <person name="Chillingworth T."/>
            <person name="Woodward J."/>
            <person name="Norberczak H."/>
            <person name="Lord A."/>
            <person name="Arrowsmith C."/>
            <person name="Jagels K."/>
            <person name="Moule S."/>
            <person name="Mungall K."/>
            <person name="Saunders M."/>
            <person name="Whitehead S."/>
            <person name="Chabalgoity J.A."/>
            <person name="Maskell D."/>
            <person name="Humphreys T."/>
            <person name="Roberts M."/>
            <person name="Barrow P.A."/>
            <person name="Dougan G."/>
            <person name="Parkhill J."/>
        </authorList>
    </citation>
    <scope>NUCLEOTIDE SEQUENCE [LARGE SCALE GENOMIC DNA]</scope>
    <source>
        <strain>287/91 / NCTC 13346</strain>
    </source>
</reference>